<evidence type="ECO:0000250" key="1"/>
<evidence type="ECO:0000255" key="2">
    <source>
        <dbReference type="HAMAP-Rule" id="MF_01391"/>
    </source>
</evidence>
<accession>A2BQQ0</accession>
<sequence>MILDNFFKNLIYEPVSVLGLLVFYFLLINLPISLGAVFKKKSSSAVRLITILVNLLITLQLLFRWSISGHFPISNLYESLYFLTWGITLGQLLVEREYQAPIIPSIAIPIELLTVAFACFVLPEDLKLSSNLVPALRSSWLVMHVSVVMLSYAALIIGSLLSMSVLFINKNKPLQIRSSSTGIGGFKLSNSYPVNDLVEPIEFSHSEELDTLSYRSILVGFVLLTLGLISGAVWANEAWGTWWSWDPKETWAFISWLFYAAYLHMRISKGWQGRKPALLASTGFLVVLVCYLGVNFLGIGLHSYGWIFG</sequence>
<proteinExistence type="inferred from homology"/>
<keyword id="KW-0201">Cytochrome c-type biogenesis</keyword>
<keyword id="KW-0472">Membrane</keyword>
<keyword id="KW-0793">Thylakoid</keyword>
<keyword id="KW-0812">Transmembrane</keyword>
<keyword id="KW-1133">Transmembrane helix</keyword>
<organism>
    <name type="scientific">Prochlorococcus marinus (strain AS9601)</name>
    <dbReference type="NCBI Taxonomy" id="146891"/>
    <lineage>
        <taxon>Bacteria</taxon>
        <taxon>Bacillati</taxon>
        <taxon>Cyanobacteriota</taxon>
        <taxon>Cyanophyceae</taxon>
        <taxon>Synechococcales</taxon>
        <taxon>Prochlorococcaceae</taxon>
        <taxon>Prochlorococcus</taxon>
    </lineage>
</organism>
<reference key="1">
    <citation type="journal article" date="2007" name="PLoS Genet.">
        <title>Patterns and implications of gene gain and loss in the evolution of Prochlorococcus.</title>
        <authorList>
            <person name="Kettler G.C."/>
            <person name="Martiny A.C."/>
            <person name="Huang K."/>
            <person name="Zucker J."/>
            <person name="Coleman M.L."/>
            <person name="Rodrigue S."/>
            <person name="Chen F."/>
            <person name="Lapidus A."/>
            <person name="Ferriera S."/>
            <person name="Johnson J."/>
            <person name="Steglich C."/>
            <person name="Church G.M."/>
            <person name="Richardson P."/>
            <person name="Chisholm S.W."/>
        </authorList>
    </citation>
    <scope>NUCLEOTIDE SEQUENCE [LARGE SCALE GENOMIC DNA]</scope>
    <source>
        <strain>AS9601</strain>
    </source>
</reference>
<feature type="chain" id="PRO_0000353704" description="Cytochrome c biogenesis protein CcsA">
    <location>
        <begin position="1"/>
        <end position="309"/>
    </location>
</feature>
<feature type="transmembrane region" description="Helical" evidence="2">
    <location>
        <begin position="18"/>
        <end position="38"/>
    </location>
</feature>
<feature type="transmembrane region" description="Helical" evidence="2">
    <location>
        <begin position="48"/>
        <end position="68"/>
    </location>
</feature>
<feature type="transmembrane region" description="Helical" evidence="2">
    <location>
        <begin position="73"/>
        <end position="93"/>
    </location>
</feature>
<feature type="transmembrane region" description="Helical" evidence="2">
    <location>
        <begin position="102"/>
        <end position="122"/>
    </location>
</feature>
<feature type="transmembrane region" description="Helical" evidence="2">
    <location>
        <begin position="148"/>
        <end position="168"/>
    </location>
</feature>
<feature type="transmembrane region" description="Helical" evidence="2">
    <location>
        <begin position="216"/>
        <end position="236"/>
    </location>
</feature>
<feature type="transmembrane region" description="Helical" evidence="2">
    <location>
        <begin position="250"/>
        <end position="267"/>
    </location>
</feature>
<feature type="transmembrane region" description="Helical" evidence="2">
    <location>
        <begin position="279"/>
        <end position="299"/>
    </location>
</feature>
<dbReference type="EMBL" id="CP000551">
    <property type="protein sequence ID" value="ABM70111.1"/>
    <property type="molecule type" value="Genomic_DNA"/>
</dbReference>
<dbReference type="SMR" id="A2BQQ0"/>
<dbReference type="STRING" id="146891.A9601_08271"/>
<dbReference type="KEGG" id="pmb:A9601_08271"/>
<dbReference type="eggNOG" id="COG0755">
    <property type="taxonomic scope" value="Bacteria"/>
</dbReference>
<dbReference type="HOGENOM" id="CLU_049710_2_4_3"/>
<dbReference type="OrthoDB" id="9814290at2"/>
<dbReference type="Proteomes" id="UP000002590">
    <property type="component" value="Chromosome"/>
</dbReference>
<dbReference type="GO" id="GO:0031676">
    <property type="term" value="C:plasma membrane-derived thylakoid membrane"/>
    <property type="evidence" value="ECO:0007669"/>
    <property type="project" value="UniProtKB-SubCell"/>
</dbReference>
<dbReference type="GO" id="GO:0020037">
    <property type="term" value="F:heme binding"/>
    <property type="evidence" value="ECO:0007669"/>
    <property type="project" value="InterPro"/>
</dbReference>
<dbReference type="GO" id="GO:0017004">
    <property type="term" value="P:cytochrome complex assembly"/>
    <property type="evidence" value="ECO:0007669"/>
    <property type="project" value="UniProtKB-UniRule"/>
</dbReference>
<dbReference type="HAMAP" id="MF_01391">
    <property type="entry name" value="CytC_CcsA"/>
    <property type="match status" value="1"/>
</dbReference>
<dbReference type="InterPro" id="IPR002541">
    <property type="entry name" value="Cyt_c_assembly"/>
</dbReference>
<dbReference type="InterPro" id="IPR017562">
    <property type="entry name" value="Cyt_c_biogenesis_CcsA"/>
</dbReference>
<dbReference type="InterPro" id="IPR045062">
    <property type="entry name" value="Cyt_c_biogenesis_CcsA/CcmC"/>
</dbReference>
<dbReference type="NCBIfam" id="TIGR03144">
    <property type="entry name" value="cytochr_II_ccsB"/>
    <property type="match status" value="1"/>
</dbReference>
<dbReference type="PANTHER" id="PTHR30071:SF1">
    <property type="entry name" value="CYTOCHROME B_B6 PROTEIN-RELATED"/>
    <property type="match status" value="1"/>
</dbReference>
<dbReference type="PANTHER" id="PTHR30071">
    <property type="entry name" value="HEME EXPORTER PROTEIN C"/>
    <property type="match status" value="1"/>
</dbReference>
<dbReference type="Pfam" id="PF01578">
    <property type="entry name" value="Cytochrom_C_asm"/>
    <property type="match status" value="1"/>
</dbReference>
<protein>
    <recommendedName>
        <fullName evidence="2">Cytochrome c biogenesis protein CcsA</fullName>
    </recommendedName>
</protein>
<gene>
    <name evidence="2" type="primary">ccsA</name>
    <name type="ordered locus">A9601_08271</name>
</gene>
<name>CCSA_PROMS</name>
<comment type="function">
    <text evidence="2">Required during biogenesis of c-type cytochromes (cytochrome c6 and cytochrome f) at the step of heme attachment.</text>
</comment>
<comment type="subunit">
    <text evidence="1">May interact with ccs1.</text>
</comment>
<comment type="subcellular location">
    <subcellularLocation>
        <location evidence="2">Cellular thylakoid membrane</location>
        <topology evidence="2">Multi-pass membrane protein</topology>
    </subcellularLocation>
</comment>
<comment type="similarity">
    <text evidence="2">Belongs to the CcmF/CycK/Ccl1/NrfE/CcsA family.</text>
</comment>